<accession>Q2NKS9</accession>
<organism>
    <name type="scientific">Bos taurus</name>
    <name type="common">Bovine</name>
    <dbReference type="NCBI Taxonomy" id="9913"/>
    <lineage>
        <taxon>Eukaryota</taxon>
        <taxon>Metazoa</taxon>
        <taxon>Chordata</taxon>
        <taxon>Craniata</taxon>
        <taxon>Vertebrata</taxon>
        <taxon>Euteleostomi</taxon>
        <taxon>Mammalia</taxon>
        <taxon>Eutheria</taxon>
        <taxon>Laurasiatheria</taxon>
        <taxon>Artiodactyla</taxon>
        <taxon>Ruminantia</taxon>
        <taxon>Pecora</taxon>
        <taxon>Bovidae</taxon>
        <taxon>Bovinae</taxon>
        <taxon>Bos</taxon>
    </lineage>
</organism>
<gene>
    <name type="primary">BBLN</name>
</gene>
<protein>
    <recommendedName>
        <fullName evidence="2">Bublin coiled-coil protein</fullName>
    </recommendedName>
    <alternativeName>
        <fullName>UPF0184 protein C9orf16 homolog</fullName>
    </alternativeName>
</protein>
<keyword id="KW-0965">Cell junction</keyword>
<keyword id="KW-0175">Coiled coil</keyword>
<keyword id="KW-0963">Cytoplasm</keyword>
<keyword id="KW-0206">Cytoskeleton</keyword>
<keyword id="KW-0597">Phosphoprotein</keyword>
<keyword id="KW-1185">Reference proteome</keyword>
<reference key="1">
    <citation type="submission" date="2006-01" db="EMBL/GenBank/DDBJ databases">
        <authorList>
            <consortium name="NIH - Mammalian Gene Collection (MGC) project"/>
        </authorList>
    </citation>
    <scope>NUCLEOTIDE SEQUENCE [LARGE SCALE MRNA]</scope>
    <source>
        <strain>Hereford</strain>
        <tissue>Testis</tissue>
    </source>
</reference>
<comment type="function">
    <text evidence="1">Essential for intermediate filament organization in intestinal cells, interacts with intermediate filament and regulates intestinal lumen morphology.</text>
</comment>
<comment type="subcellular location">
    <subcellularLocation>
        <location evidence="2">Cell junction</location>
    </subcellularLocation>
    <subcellularLocation>
        <location evidence="2">Cytoplasm</location>
        <location evidence="2">Cytoskeleton</location>
    </subcellularLocation>
    <text evidence="2">In the intestine, localizes subapically and at cell junctions. Interacts with intermediate filament (IF) proteins and localizes to the IF network in an IF-dependent manner. In dividing cells, localizes to interpolar and kinetochore microtubules.</text>
</comment>
<comment type="similarity">
    <text evidence="5">Belongs to the UPF0184 (EST00098) family.</text>
</comment>
<name>BBLN_BOVIN</name>
<feature type="chain" id="PRO_0000365072" description="Bublin coiled-coil protein">
    <location>
        <begin position="1"/>
        <end position="83"/>
    </location>
</feature>
<feature type="region of interest" description="Disordered" evidence="4">
    <location>
        <begin position="1"/>
        <end position="25"/>
    </location>
</feature>
<feature type="coiled-coil region" evidence="3">
    <location>
        <begin position="25"/>
        <end position="74"/>
    </location>
</feature>
<feature type="modified residue" description="Phosphoserine" evidence="2">
    <location>
        <position position="82"/>
    </location>
</feature>
<proteinExistence type="inferred from homology"/>
<dbReference type="EMBL" id="BC111659">
    <property type="protein sequence ID" value="AAI11660.1"/>
    <property type="molecule type" value="mRNA"/>
</dbReference>
<dbReference type="RefSeq" id="NP_001181979.1">
    <property type="nucleotide sequence ID" value="NM_001195050.2"/>
</dbReference>
<dbReference type="SMR" id="Q2NKS9"/>
<dbReference type="FunCoup" id="Q2NKS9">
    <property type="interactions" value="250"/>
</dbReference>
<dbReference type="STRING" id="9913.ENSBTAP00000018807"/>
<dbReference type="PaxDb" id="9913-ENSBTAP00000018807"/>
<dbReference type="GeneID" id="616015"/>
<dbReference type="KEGG" id="bta:616015"/>
<dbReference type="CTD" id="79095"/>
<dbReference type="VEuPathDB" id="HostDB:ENSBTAG00000014150"/>
<dbReference type="eggNOG" id="ENOG502SAFB">
    <property type="taxonomic scope" value="Eukaryota"/>
</dbReference>
<dbReference type="HOGENOM" id="CLU_167244_0_0_1"/>
<dbReference type="InParanoid" id="Q2NKS9"/>
<dbReference type="OMA" id="INLMLDQ"/>
<dbReference type="OrthoDB" id="10050612at2759"/>
<dbReference type="TreeFam" id="TF324640"/>
<dbReference type="Proteomes" id="UP000009136">
    <property type="component" value="Chromosome 11"/>
</dbReference>
<dbReference type="Bgee" id="ENSBTAG00000014150">
    <property type="expression patterns" value="Expressed in Ammon's horn and 105 other cell types or tissues"/>
</dbReference>
<dbReference type="GO" id="GO:0070161">
    <property type="term" value="C:anchoring junction"/>
    <property type="evidence" value="ECO:0007669"/>
    <property type="project" value="UniProtKB-SubCell"/>
</dbReference>
<dbReference type="GO" id="GO:0030054">
    <property type="term" value="C:cell junction"/>
    <property type="evidence" value="ECO:0000250"/>
    <property type="project" value="UniProtKB"/>
</dbReference>
<dbReference type="GO" id="GO:0005737">
    <property type="term" value="C:cytoplasm"/>
    <property type="evidence" value="ECO:0007669"/>
    <property type="project" value="UniProtKB-KW"/>
</dbReference>
<dbReference type="GO" id="GO:0005882">
    <property type="term" value="C:intermediate filament"/>
    <property type="evidence" value="ECO:0007669"/>
    <property type="project" value="Ensembl"/>
</dbReference>
<dbReference type="GO" id="GO:0005828">
    <property type="term" value="C:kinetochore microtubule"/>
    <property type="evidence" value="ECO:0007669"/>
    <property type="project" value="Ensembl"/>
</dbReference>
<dbReference type="GO" id="GO:0120219">
    <property type="term" value="C:subapical part of cell"/>
    <property type="evidence" value="ECO:0000250"/>
    <property type="project" value="UniProtKB"/>
</dbReference>
<dbReference type="GO" id="GO:0060090">
    <property type="term" value="F:molecular adaptor activity"/>
    <property type="evidence" value="ECO:0000250"/>
    <property type="project" value="UniProtKB"/>
</dbReference>
<dbReference type="GO" id="GO:0097190">
    <property type="term" value="P:apoptotic signaling pathway"/>
    <property type="evidence" value="ECO:0007669"/>
    <property type="project" value="Ensembl"/>
</dbReference>
<dbReference type="GO" id="GO:0060348">
    <property type="term" value="P:bone development"/>
    <property type="evidence" value="ECO:0007669"/>
    <property type="project" value="Ensembl"/>
</dbReference>
<dbReference type="GO" id="GO:0045453">
    <property type="term" value="P:bone resorption"/>
    <property type="evidence" value="ECO:0007669"/>
    <property type="project" value="Ensembl"/>
</dbReference>
<dbReference type="GO" id="GO:0010467">
    <property type="term" value="P:gene expression"/>
    <property type="evidence" value="ECO:0007669"/>
    <property type="project" value="Ensembl"/>
</dbReference>
<dbReference type="GO" id="GO:0045110">
    <property type="term" value="P:intermediate filament bundle assembly"/>
    <property type="evidence" value="ECO:0000250"/>
    <property type="project" value="UniProtKB"/>
</dbReference>
<dbReference type="GO" id="GO:0072674">
    <property type="term" value="P:multinuclear osteoclast differentiation"/>
    <property type="evidence" value="ECO:0007669"/>
    <property type="project" value="Ensembl"/>
</dbReference>
<dbReference type="InterPro" id="IPR005374">
    <property type="entry name" value="BBLN_eukaryota"/>
</dbReference>
<dbReference type="PANTHER" id="PTHR34344:SF1">
    <property type="entry name" value="BUBLIN COILED-COIL PROTEIN"/>
    <property type="match status" value="1"/>
</dbReference>
<dbReference type="PANTHER" id="PTHR34344">
    <property type="entry name" value="UPF0184 PROTEIN C9ORF16"/>
    <property type="match status" value="1"/>
</dbReference>
<dbReference type="Pfam" id="PF03670">
    <property type="entry name" value="UPF0184"/>
    <property type="match status" value="1"/>
</dbReference>
<evidence type="ECO:0000250" key="1">
    <source>
        <dbReference type="UniProtKB" id="Q18012"/>
    </source>
</evidence>
<evidence type="ECO:0000250" key="2">
    <source>
        <dbReference type="UniProtKB" id="Q9BUW7"/>
    </source>
</evidence>
<evidence type="ECO:0000255" key="3"/>
<evidence type="ECO:0000256" key="4">
    <source>
        <dbReference type="SAM" id="MobiDB-lite"/>
    </source>
</evidence>
<evidence type="ECO:0000305" key="5"/>
<sequence length="83" mass="9054">MSGPNGDLGTPVEAGAEGEEDGFGEAEYAAINSMLDQINSCLDHLEEKNDHLHARLQELLESNRQTRLEFQQQLGETPSDASP</sequence>